<gene>
    <name evidence="1" type="primary">proS</name>
    <name type="ordered locus">MCA2013</name>
</gene>
<proteinExistence type="inferred from homology"/>
<comment type="function">
    <text evidence="1">Catalyzes the attachment of proline to tRNA(Pro) in a two-step reaction: proline is first activated by ATP to form Pro-AMP and then transferred to the acceptor end of tRNA(Pro). As ProRS can inadvertently accommodate and process non-cognate amino acids such as alanine and cysteine, to avoid such errors it has two additional distinct editing activities against alanine. One activity is designated as 'pretransfer' editing and involves the tRNA(Pro)-independent hydrolysis of activated Ala-AMP. The other activity is designated 'posttransfer' editing and involves deacylation of mischarged Ala-tRNA(Pro). The misacylated Cys-tRNA(Pro) is not edited by ProRS.</text>
</comment>
<comment type="catalytic activity">
    <reaction evidence="1">
        <text>tRNA(Pro) + L-proline + ATP = L-prolyl-tRNA(Pro) + AMP + diphosphate</text>
        <dbReference type="Rhea" id="RHEA:14305"/>
        <dbReference type="Rhea" id="RHEA-COMP:9700"/>
        <dbReference type="Rhea" id="RHEA-COMP:9702"/>
        <dbReference type="ChEBI" id="CHEBI:30616"/>
        <dbReference type="ChEBI" id="CHEBI:33019"/>
        <dbReference type="ChEBI" id="CHEBI:60039"/>
        <dbReference type="ChEBI" id="CHEBI:78442"/>
        <dbReference type="ChEBI" id="CHEBI:78532"/>
        <dbReference type="ChEBI" id="CHEBI:456215"/>
        <dbReference type="EC" id="6.1.1.15"/>
    </reaction>
</comment>
<comment type="subunit">
    <text evidence="1">Homodimer.</text>
</comment>
<comment type="subcellular location">
    <subcellularLocation>
        <location evidence="1">Cytoplasm</location>
    </subcellularLocation>
</comment>
<comment type="domain">
    <text evidence="1">Consists of three domains: the N-terminal catalytic domain, the editing domain and the C-terminal anticodon-binding domain.</text>
</comment>
<comment type="similarity">
    <text evidence="1">Belongs to the class-II aminoacyl-tRNA synthetase family. ProS type 1 subfamily.</text>
</comment>
<name>SYP_METCA</name>
<sequence>MRTSQFPLNTLKEIPSDAEIVSHQLMLRAGLIRKLAAGLYTWLPLGLKVLRRVERVVREEMDRAGALEVLMPVVQPAELWQESGRWEQYGPELARLHDRHDRAFCLGPTHEEIITDLARNELKSYRQLPVNFYQIQTKFRDEIRPRFGVMRAREFVMKDAYSFHLDQESLAQTYDAMYVAYSNIFSRLGLRFRPVLADTGAIGGSHSHEFHVLADSGEDAIAFSTVSDYAANVEQAEALAPTAPRPAPTAALLKVETPGKKSIAEVSEFLGVPPHQILKTVAVMQTIVDDDGLDRDMFVTVLLRGDHELNEVKLGKVLGRFRFASEDEIERHMGCRPGYIGPLNLPAGTAVGPVYADRAVAVMSDFVCGANEAGYHFSGVNWERDLPLPQDEYLCDLRNVVEGDPSPDGLGTLRIARGIEVGHIFQLGTKYSAALNATVLNEEGRSQVMLMGCYGIGVSRVVAAAIEQNHDERGIVWPEALAPFQVALCPINMQTSARVRTTAERLYAELSAAGFEVLYDDRKVRPGVMFADMELIGIPHRIVISERGLDSGALEYKGRRDADNQSIGIDGVIEFLRERSESR</sequence>
<keyword id="KW-0030">Aminoacyl-tRNA synthetase</keyword>
<keyword id="KW-0067">ATP-binding</keyword>
<keyword id="KW-0963">Cytoplasm</keyword>
<keyword id="KW-0436">Ligase</keyword>
<keyword id="KW-0547">Nucleotide-binding</keyword>
<keyword id="KW-0648">Protein biosynthesis</keyword>
<keyword id="KW-1185">Reference proteome</keyword>
<organism>
    <name type="scientific">Methylococcus capsulatus (strain ATCC 33009 / NCIMB 11132 / Bath)</name>
    <dbReference type="NCBI Taxonomy" id="243233"/>
    <lineage>
        <taxon>Bacteria</taxon>
        <taxon>Pseudomonadati</taxon>
        <taxon>Pseudomonadota</taxon>
        <taxon>Gammaproteobacteria</taxon>
        <taxon>Methylococcales</taxon>
        <taxon>Methylococcaceae</taxon>
        <taxon>Methylococcus</taxon>
    </lineage>
</organism>
<dbReference type="EC" id="6.1.1.15" evidence="1"/>
<dbReference type="EMBL" id="AE017282">
    <property type="protein sequence ID" value="AAU91757.1"/>
    <property type="molecule type" value="Genomic_DNA"/>
</dbReference>
<dbReference type="RefSeq" id="WP_010961258.1">
    <property type="nucleotide sequence ID" value="NC_002977.6"/>
</dbReference>
<dbReference type="SMR" id="Q606K3"/>
<dbReference type="STRING" id="243233.MCA2013"/>
<dbReference type="GeneID" id="88224241"/>
<dbReference type="KEGG" id="mca:MCA2013"/>
<dbReference type="eggNOG" id="COG0442">
    <property type="taxonomic scope" value="Bacteria"/>
</dbReference>
<dbReference type="HOGENOM" id="CLU_016739_0_0_6"/>
<dbReference type="Proteomes" id="UP000006821">
    <property type="component" value="Chromosome"/>
</dbReference>
<dbReference type="GO" id="GO:0005829">
    <property type="term" value="C:cytosol"/>
    <property type="evidence" value="ECO:0007669"/>
    <property type="project" value="TreeGrafter"/>
</dbReference>
<dbReference type="GO" id="GO:0002161">
    <property type="term" value="F:aminoacyl-tRNA deacylase activity"/>
    <property type="evidence" value="ECO:0007669"/>
    <property type="project" value="InterPro"/>
</dbReference>
<dbReference type="GO" id="GO:0005524">
    <property type="term" value="F:ATP binding"/>
    <property type="evidence" value="ECO:0007669"/>
    <property type="project" value="UniProtKB-UniRule"/>
</dbReference>
<dbReference type="GO" id="GO:0004827">
    <property type="term" value="F:proline-tRNA ligase activity"/>
    <property type="evidence" value="ECO:0007669"/>
    <property type="project" value="UniProtKB-UniRule"/>
</dbReference>
<dbReference type="GO" id="GO:0006433">
    <property type="term" value="P:prolyl-tRNA aminoacylation"/>
    <property type="evidence" value="ECO:0007669"/>
    <property type="project" value="UniProtKB-UniRule"/>
</dbReference>
<dbReference type="CDD" id="cd04334">
    <property type="entry name" value="ProRS-INS"/>
    <property type="match status" value="1"/>
</dbReference>
<dbReference type="CDD" id="cd00861">
    <property type="entry name" value="ProRS_anticodon_short"/>
    <property type="match status" value="1"/>
</dbReference>
<dbReference type="CDD" id="cd00779">
    <property type="entry name" value="ProRS_core_prok"/>
    <property type="match status" value="1"/>
</dbReference>
<dbReference type="FunFam" id="3.30.930.10:FF:000043">
    <property type="entry name" value="Proline--tRNA ligase"/>
    <property type="match status" value="1"/>
</dbReference>
<dbReference type="FunFam" id="3.30.930.10:FF:000097">
    <property type="entry name" value="Proline--tRNA ligase"/>
    <property type="match status" value="1"/>
</dbReference>
<dbReference type="FunFam" id="3.40.50.800:FF:000006">
    <property type="entry name" value="Proline--tRNA ligase"/>
    <property type="match status" value="1"/>
</dbReference>
<dbReference type="Gene3D" id="3.40.50.800">
    <property type="entry name" value="Anticodon-binding domain"/>
    <property type="match status" value="1"/>
</dbReference>
<dbReference type="Gene3D" id="3.30.930.10">
    <property type="entry name" value="Bira Bifunctional Protein, Domain 2"/>
    <property type="match status" value="2"/>
</dbReference>
<dbReference type="Gene3D" id="3.90.960.10">
    <property type="entry name" value="YbaK/aminoacyl-tRNA synthetase-associated domain"/>
    <property type="match status" value="1"/>
</dbReference>
<dbReference type="HAMAP" id="MF_01569">
    <property type="entry name" value="Pro_tRNA_synth_type1"/>
    <property type="match status" value="1"/>
</dbReference>
<dbReference type="InterPro" id="IPR002314">
    <property type="entry name" value="aa-tRNA-synt_IIb"/>
</dbReference>
<dbReference type="InterPro" id="IPR006195">
    <property type="entry name" value="aa-tRNA-synth_II"/>
</dbReference>
<dbReference type="InterPro" id="IPR045864">
    <property type="entry name" value="aa-tRNA-synth_II/BPL/LPL"/>
</dbReference>
<dbReference type="InterPro" id="IPR004154">
    <property type="entry name" value="Anticodon-bd"/>
</dbReference>
<dbReference type="InterPro" id="IPR036621">
    <property type="entry name" value="Anticodon-bd_dom_sf"/>
</dbReference>
<dbReference type="InterPro" id="IPR002316">
    <property type="entry name" value="Pro-tRNA-ligase_IIa"/>
</dbReference>
<dbReference type="InterPro" id="IPR004500">
    <property type="entry name" value="Pro-tRNA-synth_IIa_bac-type"/>
</dbReference>
<dbReference type="InterPro" id="IPR023717">
    <property type="entry name" value="Pro-tRNA-Synthase_IIa_type1"/>
</dbReference>
<dbReference type="InterPro" id="IPR050062">
    <property type="entry name" value="Pro-tRNA_synthetase"/>
</dbReference>
<dbReference type="InterPro" id="IPR044140">
    <property type="entry name" value="ProRS_anticodon_short"/>
</dbReference>
<dbReference type="InterPro" id="IPR033730">
    <property type="entry name" value="ProRS_core_prok"/>
</dbReference>
<dbReference type="InterPro" id="IPR036754">
    <property type="entry name" value="YbaK/aa-tRNA-synt-asso_dom_sf"/>
</dbReference>
<dbReference type="InterPro" id="IPR007214">
    <property type="entry name" value="YbaK/aa-tRNA-synth-assoc-dom"/>
</dbReference>
<dbReference type="NCBIfam" id="NF006625">
    <property type="entry name" value="PRK09194.1"/>
    <property type="match status" value="1"/>
</dbReference>
<dbReference type="NCBIfam" id="TIGR00409">
    <property type="entry name" value="proS_fam_II"/>
    <property type="match status" value="1"/>
</dbReference>
<dbReference type="PANTHER" id="PTHR42753">
    <property type="entry name" value="MITOCHONDRIAL RIBOSOME PROTEIN L39/PROLYL-TRNA LIGASE FAMILY MEMBER"/>
    <property type="match status" value="1"/>
</dbReference>
<dbReference type="PANTHER" id="PTHR42753:SF2">
    <property type="entry name" value="PROLINE--TRNA LIGASE"/>
    <property type="match status" value="1"/>
</dbReference>
<dbReference type="Pfam" id="PF03129">
    <property type="entry name" value="HGTP_anticodon"/>
    <property type="match status" value="1"/>
</dbReference>
<dbReference type="Pfam" id="PF00587">
    <property type="entry name" value="tRNA-synt_2b"/>
    <property type="match status" value="1"/>
</dbReference>
<dbReference type="Pfam" id="PF04073">
    <property type="entry name" value="tRNA_edit"/>
    <property type="match status" value="1"/>
</dbReference>
<dbReference type="PIRSF" id="PIRSF001535">
    <property type="entry name" value="ProRS_1"/>
    <property type="match status" value="1"/>
</dbReference>
<dbReference type="PRINTS" id="PR01046">
    <property type="entry name" value="TRNASYNTHPRO"/>
</dbReference>
<dbReference type="SUPFAM" id="SSF52954">
    <property type="entry name" value="Class II aaRS ABD-related"/>
    <property type="match status" value="1"/>
</dbReference>
<dbReference type="SUPFAM" id="SSF55681">
    <property type="entry name" value="Class II aaRS and biotin synthetases"/>
    <property type="match status" value="1"/>
</dbReference>
<dbReference type="SUPFAM" id="SSF55826">
    <property type="entry name" value="YbaK/ProRS associated domain"/>
    <property type="match status" value="1"/>
</dbReference>
<dbReference type="PROSITE" id="PS50862">
    <property type="entry name" value="AA_TRNA_LIGASE_II"/>
    <property type="match status" value="1"/>
</dbReference>
<evidence type="ECO:0000255" key="1">
    <source>
        <dbReference type="HAMAP-Rule" id="MF_01569"/>
    </source>
</evidence>
<reference key="1">
    <citation type="journal article" date="2004" name="PLoS Biol.">
        <title>Genomic insights into methanotrophy: the complete genome sequence of Methylococcus capsulatus (Bath).</title>
        <authorList>
            <person name="Ward N.L."/>
            <person name="Larsen O."/>
            <person name="Sakwa J."/>
            <person name="Bruseth L."/>
            <person name="Khouri H.M."/>
            <person name="Durkin A.S."/>
            <person name="Dimitrov G."/>
            <person name="Jiang L."/>
            <person name="Scanlan D."/>
            <person name="Kang K.H."/>
            <person name="Lewis M.R."/>
            <person name="Nelson K.E."/>
            <person name="Methe B.A."/>
            <person name="Wu M."/>
            <person name="Heidelberg J.F."/>
            <person name="Paulsen I.T."/>
            <person name="Fouts D.E."/>
            <person name="Ravel J."/>
            <person name="Tettelin H."/>
            <person name="Ren Q."/>
            <person name="Read T.D."/>
            <person name="DeBoy R.T."/>
            <person name="Seshadri R."/>
            <person name="Salzberg S.L."/>
            <person name="Jensen H.B."/>
            <person name="Birkeland N.K."/>
            <person name="Nelson W.C."/>
            <person name="Dodson R.J."/>
            <person name="Grindhaug S.H."/>
            <person name="Holt I.E."/>
            <person name="Eidhammer I."/>
            <person name="Jonasen I."/>
            <person name="Vanaken S."/>
            <person name="Utterback T.R."/>
            <person name="Feldblyum T.V."/>
            <person name="Fraser C.M."/>
            <person name="Lillehaug J.R."/>
            <person name="Eisen J.A."/>
        </authorList>
    </citation>
    <scope>NUCLEOTIDE SEQUENCE [LARGE SCALE GENOMIC DNA]</scope>
    <source>
        <strain>ATCC 33009 / NCIMB 11132 / Bath</strain>
    </source>
</reference>
<accession>Q606K3</accession>
<protein>
    <recommendedName>
        <fullName evidence="1">Proline--tRNA ligase</fullName>
        <ecNumber evidence="1">6.1.1.15</ecNumber>
    </recommendedName>
    <alternativeName>
        <fullName evidence="1">Prolyl-tRNA synthetase</fullName>
        <shortName evidence="1">ProRS</shortName>
    </alternativeName>
</protein>
<feature type="chain" id="PRO_0000248722" description="Proline--tRNA ligase">
    <location>
        <begin position="1"/>
        <end position="583"/>
    </location>
</feature>